<name>Y1406_STRPB</name>
<comment type="subcellular location">
    <subcellularLocation>
        <location evidence="1">Cytoplasm</location>
    </subcellularLocation>
</comment>
<comment type="similarity">
    <text evidence="1">Belongs to the UPF0291 family.</text>
</comment>
<proteinExistence type="inferred from homology"/>
<evidence type="ECO:0000255" key="1">
    <source>
        <dbReference type="HAMAP-Rule" id="MF_01103"/>
    </source>
</evidence>
<evidence type="ECO:0000256" key="2">
    <source>
        <dbReference type="SAM" id="MobiDB-lite"/>
    </source>
</evidence>
<organism>
    <name type="scientific">Streptococcus pyogenes serotype M12 (strain MGAS2096)</name>
    <dbReference type="NCBI Taxonomy" id="370553"/>
    <lineage>
        <taxon>Bacteria</taxon>
        <taxon>Bacillati</taxon>
        <taxon>Bacillota</taxon>
        <taxon>Bacilli</taxon>
        <taxon>Lactobacillales</taxon>
        <taxon>Streptococcaceae</taxon>
        <taxon>Streptococcus</taxon>
    </lineage>
</organism>
<feature type="chain" id="PRO_1000065030" description="UPF0291 protein MGAS2096_Spy1406">
    <location>
        <begin position="1"/>
        <end position="85"/>
    </location>
</feature>
<feature type="region of interest" description="Disordered" evidence="2">
    <location>
        <begin position="62"/>
        <end position="85"/>
    </location>
</feature>
<sequence>MDPKKIARINELAKKKKTVGLTGPEKVEQAKLREEYIEGYRRSVRHHIEGIKLVDEEGNDVTPEKLRQVQREKGLHGRSLDDPKS</sequence>
<gene>
    <name type="ordered locus">MGAS2096_Spy1406</name>
</gene>
<keyword id="KW-0963">Cytoplasm</keyword>
<protein>
    <recommendedName>
        <fullName evidence="1">UPF0291 protein MGAS2096_Spy1406</fullName>
    </recommendedName>
</protein>
<accession>Q1JAF0</accession>
<reference key="1">
    <citation type="journal article" date="2006" name="Proc. Natl. Acad. Sci. U.S.A.">
        <title>Molecular genetic anatomy of inter- and intraserotype variation in the human bacterial pathogen group A Streptococcus.</title>
        <authorList>
            <person name="Beres S.B."/>
            <person name="Richter E.W."/>
            <person name="Nagiec M.J."/>
            <person name="Sumby P."/>
            <person name="Porcella S.F."/>
            <person name="DeLeo F.R."/>
            <person name="Musser J.M."/>
        </authorList>
    </citation>
    <scope>NUCLEOTIDE SEQUENCE [LARGE SCALE GENOMIC DNA]</scope>
    <source>
        <strain>MGAS2096</strain>
    </source>
</reference>
<dbReference type="EMBL" id="CP000261">
    <property type="protein sequence ID" value="ABF36458.1"/>
    <property type="molecule type" value="Genomic_DNA"/>
</dbReference>
<dbReference type="SMR" id="Q1JAF0"/>
<dbReference type="KEGG" id="spj:MGAS2096_Spy1406"/>
<dbReference type="HOGENOM" id="CLU_173137_0_2_9"/>
<dbReference type="GO" id="GO:0005737">
    <property type="term" value="C:cytoplasm"/>
    <property type="evidence" value="ECO:0007669"/>
    <property type="project" value="UniProtKB-SubCell"/>
</dbReference>
<dbReference type="Gene3D" id="1.10.287.540">
    <property type="entry name" value="Helix hairpin bin"/>
    <property type="match status" value="1"/>
</dbReference>
<dbReference type="HAMAP" id="MF_01103">
    <property type="entry name" value="UPF0291"/>
    <property type="match status" value="1"/>
</dbReference>
<dbReference type="InterPro" id="IPR009242">
    <property type="entry name" value="DUF896"/>
</dbReference>
<dbReference type="NCBIfam" id="NF002711">
    <property type="entry name" value="PRK02539.1"/>
    <property type="match status" value="1"/>
</dbReference>
<dbReference type="PANTHER" id="PTHR37300">
    <property type="entry name" value="UPF0291 PROTEIN CBO2609/CLC_2481"/>
    <property type="match status" value="1"/>
</dbReference>
<dbReference type="PANTHER" id="PTHR37300:SF1">
    <property type="entry name" value="UPF0291 PROTEIN YNZC"/>
    <property type="match status" value="1"/>
</dbReference>
<dbReference type="Pfam" id="PF05979">
    <property type="entry name" value="DUF896"/>
    <property type="match status" value="1"/>
</dbReference>
<dbReference type="SUPFAM" id="SSF158221">
    <property type="entry name" value="YnzC-like"/>
    <property type="match status" value="1"/>
</dbReference>